<proteinExistence type="inferred from homology"/>
<gene>
    <name type="primary">lppX</name>
    <name type="ordered locus">MT3017</name>
</gene>
<accession>P9WK64</accession>
<accession>L0TCQ0</accession>
<accession>P65306</accession>
<accession>P96286</accession>
<organism>
    <name type="scientific">Mycobacterium tuberculosis (strain CDC 1551 / Oshkosh)</name>
    <dbReference type="NCBI Taxonomy" id="83331"/>
    <lineage>
        <taxon>Bacteria</taxon>
        <taxon>Bacillati</taxon>
        <taxon>Actinomycetota</taxon>
        <taxon>Actinomycetes</taxon>
        <taxon>Mycobacteriales</taxon>
        <taxon>Mycobacteriaceae</taxon>
        <taxon>Mycobacterium</taxon>
        <taxon>Mycobacterium tuberculosis complex</taxon>
    </lineage>
</organism>
<name>LPPX_MYCTO</name>
<dbReference type="EMBL" id="AE000516">
    <property type="protein sequence ID" value="AAK47344.1"/>
    <property type="molecule type" value="Genomic_DNA"/>
</dbReference>
<dbReference type="PIR" id="F70668">
    <property type="entry name" value="F70668"/>
</dbReference>
<dbReference type="RefSeq" id="WP_003414872.1">
    <property type="nucleotide sequence ID" value="NZ_KK341227.1"/>
</dbReference>
<dbReference type="SMR" id="P9WK64"/>
<dbReference type="KEGG" id="mtc:MT3017"/>
<dbReference type="PATRIC" id="fig|83331.31.peg.3258"/>
<dbReference type="HOGENOM" id="CLU_1198710_0_0_11"/>
<dbReference type="Proteomes" id="UP000001020">
    <property type="component" value="Chromosome"/>
</dbReference>
<dbReference type="GO" id="GO:0009986">
    <property type="term" value="C:cell surface"/>
    <property type="evidence" value="ECO:0007669"/>
    <property type="project" value="UniProtKB-SubCell"/>
</dbReference>
<dbReference type="GO" id="GO:0005576">
    <property type="term" value="C:extracellular region"/>
    <property type="evidence" value="ECO:0007669"/>
    <property type="project" value="UniProtKB-SubCell"/>
</dbReference>
<dbReference type="GO" id="GO:0005886">
    <property type="term" value="C:plasma membrane"/>
    <property type="evidence" value="ECO:0007669"/>
    <property type="project" value="UniProtKB-SubCell"/>
</dbReference>
<dbReference type="GO" id="GO:0006869">
    <property type="term" value="P:lipid transport"/>
    <property type="evidence" value="ECO:0007669"/>
    <property type="project" value="UniProtKB-KW"/>
</dbReference>
<dbReference type="CDD" id="cd16334">
    <property type="entry name" value="LppX-like"/>
    <property type="match status" value="1"/>
</dbReference>
<dbReference type="Gene3D" id="2.50.20.20">
    <property type="match status" value="1"/>
</dbReference>
<dbReference type="InterPro" id="IPR029046">
    <property type="entry name" value="LolA/LolB/LppX"/>
</dbReference>
<dbReference type="InterPro" id="IPR009830">
    <property type="entry name" value="LppX/LprAFG"/>
</dbReference>
<dbReference type="Pfam" id="PF07161">
    <property type="entry name" value="LppX_LprAFG"/>
    <property type="match status" value="1"/>
</dbReference>
<dbReference type="SUPFAM" id="SSF89392">
    <property type="entry name" value="Prokaryotic lipoproteins and lipoprotein localization factors"/>
    <property type="match status" value="1"/>
</dbReference>
<dbReference type="PROSITE" id="PS51257">
    <property type="entry name" value="PROKAR_LIPOPROTEIN"/>
    <property type="match status" value="1"/>
</dbReference>
<keyword id="KW-1003">Cell membrane</keyword>
<keyword id="KW-0134">Cell wall</keyword>
<keyword id="KW-0445">Lipid transport</keyword>
<keyword id="KW-0449">Lipoprotein</keyword>
<keyword id="KW-0472">Membrane</keyword>
<keyword id="KW-0564">Palmitate</keyword>
<keyword id="KW-1185">Reference proteome</keyword>
<keyword id="KW-0964">Secreted</keyword>
<keyword id="KW-0732">Signal</keyword>
<keyword id="KW-0813">Transport</keyword>
<sequence length="233" mass="24140">MNDGKRAVTSAVLVVLGACLALWLSGCSSPKPDAEEQGVPVSPTASDPALLAEIRQSLDATKGLTSVHVAVRTTGKVDSLLGITSADVDVRANPLAAKGVCTYNDEQGVPFRVQGDNISVKLFDDWSNLGSISELSTSRVLDPAAGVTQLLSGVTNLQAQGTEVIDGISTTKITGTIPASSVKMLDPGAKSARPATVWIAQDGSHHLVRASIDLGSGSIQLTQSKWNEPVNVD</sequence>
<comment type="function">
    <text evidence="1">Might be involved in translocating phthiocerol dimycocerosates (PDIM) from the cell membrane to the outer membrane; PDIM forms part of the cell wall.</text>
</comment>
<comment type="subcellular location">
    <subcellularLocation>
        <location evidence="2">Cell membrane</location>
        <topology evidence="2">Lipid-anchor</topology>
    </subcellularLocation>
    <subcellularLocation>
        <location evidence="1">Cell surface</location>
    </subcellularLocation>
    <subcellularLocation>
        <location evidence="1">Secreted</location>
        <location evidence="1">Cell wall</location>
    </subcellularLocation>
    <subcellularLocation>
        <location evidence="1">Secreted</location>
    </subcellularLocation>
</comment>
<comment type="domain">
    <text evidence="1">Forms a U-shaped beta-half-barrel with a large hydrophobic cavity which is large enough to hold a single phthiocerol dimycocerosate (PDIM) molecule.</text>
</comment>
<comment type="PTM">
    <text evidence="1">Modified by Lgt on Cys-27 with an S-linked diacylglycerol with a mixture of C16 and C19 fatty acids (palmitic and tuberculostearic acid), signal peptide is removed by LspA, modified by Lnt with an amide-linked mixture of C16 and C19 fatty acids.</text>
</comment>
<comment type="similarity">
    <text evidence="3">Belongs to the LppX/LprAFG lipoprotein family.</text>
</comment>
<reference key="1">
    <citation type="journal article" date="2002" name="J. Bacteriol.">
        <title>Whole-genome comparison of Mycobacterium tuberculosis clinical and laboratory strains.</title>
        <authorList>
            <person name="Fleischmann R.D."/>
            <person name="Alland D."/>
            <person name="Eisen J.A."/>
            <person name="Carpenter L."/>
            <person name="White O."/>
            <person name="Peterson J.D."/>
            <person name="DeBoy R.T."/>
            <person name="Dodson R.J."/>
            <person name="Gwinn M.L."/>
            <person name="Haft D.H."/>
            <person name="Hickey E.K."/>
            <person name="Kolonay J.F."/>
            <person name="Nelson W.C."/>
            <person name="Umayam L.A."/>
            <person name="Ermolaeva M.D."/>
            <person name="Salzberg S.L."/>
            <person name="Delcher A."/>
            <person name="Utterback T.R."/>
            <person name="Weidman J.F."/>
            <person name="Khouri H.M."/>
            <person name="Gill J."/>
            <person name="Mikula A."/>
            <person name="Bishai W."/>
            <person name="Jacobs W.R. Jr."/>
            <person name="Venter J.C."/>
            <person name="Fraser C.M."/>
        </authorList>
    </citation>
    <scope>NUCLEOTIDE SEQUENCE [LARGE SCALE GENOMIC DNA]</scope>
    <source>
        <strain>CDC 1551 / Oshkosh</strain>
    </source>
</reference>
<protein>
    <recommendedName>
        <fullName>Putative phthiocerol dimycocerosate transporter LppX</fullName>
    </recommendedName>
    <alternativeName>
        <fullName>Lipoprotein LppX</fullName>
    </alternativeName>
</protein>
<evidence type="ECO:0000250" key="1">
    <source>
        <dbReference type="UniProtKB" id="P9WK65"/>
    </source>
</evidence>
<evidence type="ECO:0000255" key="2">
    <source>
        <dbReference type="PROSITE-ProRule" id="PRU00303"/>
    </source>
</evidence>
<evidence type="ECO:0000305" key="3"/>
<feature type="signal peptide" evidence="2">
    <location>
        <begin position="1"/>
        <end position="26"/>
    </location>
</feature>
<feature type="chain" id="PRO_0000427708" description="Putative phthiocerol dimycocerosate transporter LppX">
    <location>
        <begin position="27"/>
        <end position="233"/>
    </location>
</feature>
<feature type="lipid moiety-binding region" description="N-palmitoyl cysteine" evidence="2">
    <location>
        <position position="27"/>
    </location>
</feature>
<feature type="lipid moiety-binding region" description="S-diacylglycerol cysteine" evidence="2">
    <location>
        <position position="27"/>
    </location>
</feature>